<dbReference type="EMBL" id="AF085199">
    <property type="protein sequence ID" value="AAD09753.1"/>
    <property type="molecule type" value="mRNA"/>
</dbReference>
<dbReference type="EMBL" id="AY644768">
    <property type="protein sequence ID" value="AAV85456.1"/>
    <property type="molecule type" value="mRNA"/>
</dbReference>
<dbReference type="EMBL" id="AL132987">
    <property type="status" value="NOT_ANNOTATED_CDS"/>
    <property type="molecule type" value="Genomic_DNA"/>
</dbReference>
<dbReference type="EMBL" id="CH471061">
    <property type="protein sequence ID" value="EAW81502.1"/>
    <property type="molecule type" value="Genomic_DNA"/>
</dbReference>
<dbReference type="EMBL" id="BC023021">
    <property type="protein sequence ID" value="AAH23021.1"/>
    <property type="molecule type" value="mRNA"/>
</dbReference>
<dbReference type="EMBL" id="X15786">
    <property type="protein sequence ID" value="CAA33787.1"/>
    <property type="status" value="ALT_SEQ"/>
    <property type="molecule type" value="mRNA"/>
</dbReference>
<dbReference type="EMBL" id="AJ132949">
    <property type="protein sequence ID" value="CAB36967.1"/>
    <property type="molecule type" value="mRNA"/>
</dbReference>
<dbReference type="EMBL" id="BX248744">
    <property type="protein sequence ID" value="CAD66551.1"/>
    <property type="molecule type" value="mRNA"/>
</dbReference>
<dbReference type="CCDS" id="CCDS9905.1">
    <molecule id="Q8TBA6-1"/>
</dbReference>
<dbReference type="PIR" id="I38153">
    <property type="entry name" value="I38153"/>
</dbReference>
<dbReference type="RefSeq" id="NP_005104.3">
    <molecule id="Q8TBA6-1"/>
    <property type="nucleotide sequence ID" value="NM_005113.3"/>
</dbReference>
<dbReference type="RefSeq" id="XP_011535722.1">
    <molecule id="Q8TBA6-2"/>
    <property type="nucleotide sequence ID" value="XM_011537420.4"/>
</dbReference>
<dbReference type="RefSeq" id="XP_047287977.1">
    <molecule id="Q8TBA6-1"/>
    <property type="nucleotide sequence ID" value="XM_047432021.1"/>
</dbReference>
<dbReference type="RefSeq" id="XP_054233121.1">
    <molecule id="Q8TBA6-1"/>
    <property type="nucleotide sequence ID" value="XM_054377146.1"/>
</dbReference>
<dbReference type="RefSeq" id="XP_054233122.1">
    <molecule id="Q8TBA6-2"/>
    <property type="nucleotide sequence ID" value="XM_054377147.1"/>
</dbReference>
<dbReference type="SMR" id="Q8TBA6"/>
<dbReference type="BioGRID" id="115275">
    <property type="interactions" value="256"/>
</dbReference>
<dbReference type="FunCoup" id="Q8TBA6">
    <property type="interactions" value="2593"/>
</dbReference>
<dbReference type="IntAct" id="Q8TBA6">
    <property type="interactions" value="112"/>
</dbReference>
<dbReference type="MINT" id="Q8TBA6"/>
<dbReference type="STRING" id="9606.ENSP00000163416"/>
<dbReference type="TCDB" id="9.B.392.1.1">
    <property type="family name" value="the golgi apparatus golgin (golgin) family"/>
</dbReference>
<dbReference type="iPTMnet" id="Q8TBA6"/>
<dbReference type="PhosphoSitePlus" id="Q8TBA6"/>
<dbReference type="SwissPalm" id="Q8TBA6"/>
<dbReference type="BioMuta" id="GOLGA5"/>
<dbReference type="DMDM" id="296439337"/>
<dbReference type="jPOST" id="Q8TBA6"/>
<dbReference type="MassIVE" id="Q8TBA6"/>
<dbReference type="PaxDb" id="9606-ENSP00000163416"/>
<dbReference type="PeptideAtlas" id="Q8TBA6"/>
<dbReference type="ProteomicsDB" id="73978">
    <molecule id="Q8TBA6-1"/>
</dbReference>
<dbReference type="ProteomicsDB" id="73979">
    <molecule id="Q8TBA6-2"/>
</dbReference>
<dbReference type="Pumba" id="Q8TBA6"/>
<dbReference type="ABCD" id="Q8TBA6">
    <property type="antibodies" value="1 sequenced antibody"/>
</dbReference>
<dbReference type="Antibodypedia" id="15">
    <property type="antibodies" value="274 antibodies from 26 providers"/>
</dbReference>
<dbReference type="DNASU" id="9950"/>
<dbReference type="Ensembl" id="ENST00000163416.7">
    <molecule id="Q8TBA6-1"/>
    <property type="protein sequence ID" value="ENSP00000163416.2"/>
    <property type="gene ID" value="ENSG00000066455.13"/>
</dbReference>
<dbReference type="GeneID" id="9950"/>
<dbReference type="KEGG" id="hsa:9950"/>
<dbReference type="MANE-Select" id="ENST00000163416.7">
    <property type="protein sequence ID" value="ENSP00000163416.2"/>
    <property type="RefSeq nucleotide sequence ID" value="NM_005113.4"/>
    <property type="RefSeq protein sequence ID" value="NP_005104.4"/>
</dbReference>
<dbReference type="UCSC" id="uc001yaz.3">
    <molecule id="Q8TBA6-1"/>
    <property type="organism name" value="human"/>
</dbReference>
<dbReference type="AGR" id="HGNC:4428"/>
<dbReference type="CTD" id="9950"/>
<dbReference type="DisGeNET" id="9950"/>
<dbReference type="GeneCards" id="GOLGA5"/>
<dbReference type="HGNC" id="HGNC:4428">
    <property type="gene designation" value="GOLGA5"/>
</dbReference>
<dbReference type="HPA" id="ENSG00000066455">
    <property type="expression patterns" value="Low tissue specificity"/>
</dbReference>
<dbReference type="MalaCards" id="GOLGA5"/>
<dbReference type="MIM" id="606918">
    <property type="type" value="gene"/>
</dbReference>
<dbReference type="neXtProt" id="NX_Q8TBA6"/>
<dbReference type="OpenTargets" id="ENSG00000066455"/>
<dbReference type="Orphanet" id="146">
    <property type="disease" value="Differentiated thyroid carcinoma"/>
</dbReference>
<dbReference type="PharmGKB" id="PA28809"/>
<dbReference type="VEuPathDB" id="HostDB:ENSG00000066455"/>
<dbReference type="eggNOG" id="KOG4677">
    <property type="taxonomic scope" value="Eukaryota"/>
</dbReference>
<dbReference type="GeneTree" id="ENSGT00390000018470"/>
<dbReference type="HOGENOM" id="CLU_022484_0_0_1"/>
<dbReference type="InParanoid" id="Q8TBA6"/>
<dbReference type="OMA" id="CSSYEAH"/>
<dbReference type="OrthoDB" id="248903at2759"/>
<dbReference type="PAN-GO" id="Q8TBA6">
    <property type="GO annotations" value="4 GO annotations based on evolutionary models"/>
</dbReference>
<dbReference type="PhylomeDB" id="Q8TBA6"/>
<dbReference type="TreeFam" id="TF319468"/>
<dbReference type="PathwayCommons" id="Q8TBA6"/>
<dbReference type="Reactome" id="R-HSA-6811438">
    <property type="pathway name" value="Intra-Golgi traffic"/>
</dbReference>
<dbReference type="SignaLink" id="Q8TBA6"/>
<dbReference type="BioGRID-ORCS" id="9950">
    <property type="hits" value="5 hits in 1156 CRISPR screens"/>
</dbReference>
<dbReference type="ChiTaRS" id="GOLGA5">
    <property type="organism name" value="human"/>
</dbReference>
<dbReference type="GeneWiki" id="GOLGA5"/>
<dbReference type="GenomeRNAi" id="9950"/>
<dbReference type="Pharos" id="Q8TBA6">
    <property type="development level" value="Tbio"/>
</dbReference>
<dbReference type="PRO" id="PR:Q8TBA6"/>
<dbReference type="Proteomes" id="UP000005640">
    <property type="component" value="Chromosome 14"/>
</dbReference>
<dbReference type="RNAct" id="Q8TBA6">
    <property type="molecule type" value="protein"/>
</dbReference>
<dbReference type="Bgee" id="ENSG00000066455">
    <property type="expression patterns" value="Expressed in secondary oocyte and 196 other cell types or tissues"/>
</dbReference>
<dbReference type="ExpressionAtlas" id="Q8TBA6">
    <property type="expression patterns" value="baseline and differential"/>
</dbReference>
<dbReference type="GO" id="GO:0005801">
    <property type="term" value="C:cis-Golgi network"/>
    <property type="evidence" value="ECO:0000314"/>
    <property type="project" value="UniProtKB"/>
</dbReference>
<dbReference type="GO" id="GO:0005794">
    <property type="term" value="C:Golgi apparatus"/>
    <property type="evidence" value="ECO:0000314"/>
    <property type="project" value="HPA"/>
</dbReference>
<dbReference type="GO" id="GO:0031985">
    <property type="term" value="C:Golgi cisterna"/>
    <property type="evidence" value="ECO:0000314"/>
    <property type="project" value="UniProtKB"/>
</dbReference>
<dbReference type="GO" id="GO:0000139">
    <property type="term" value="C:Golgi membrane"/>
    <property type="evidence" value="ECO:0000318"/>
    <property type="project" value="GO_Central"/>
</dbReference>
<dbReference type="GO" id="GO:0016020">
    <property type="term" value="C:membrane"/>
    <property type="evidence" value="ECO:0000314"/>
    <property type="project" value="UniProtKB"/>
</dbReference>
<dbReference type="GO" id="GO:0030133">
    <property type="term" value="C:transport vesicle"/>
    <property type="evidence" value="ECO:0000304"/>
    <property type="project" value="Reactome"/>
</dbReference>
<dbReference type="GO" id="GO:0042803">
    <property type="term" value="F:protein homodimerization activity"/>
    <property type="evidence" value="ECO:0000353"/>
    <property type="project" value="UniProtKB"/>
</dbReference>
<dbReference type="GO" id="GO:0031267">
    <property type="term" value="F:small GTPase binding"/>
    <property type="evidence" value="ECO:0000314"/>
    <property type="project" value="UniProtKB"/>
</dbReference>
<dbReference type="GO" id="GO:0007030">
    <property type="term" value="P:Golgi organization"/>
    <property type="evidence" value="ECO:0000315"/>
    <property type="project" value="UniProtKB"/>
</dbReference>
<dbReference type="GO" id="GO:0048193">
    <property type="term" value="P:Golgi vesicle transport"/>
    <property type="evidence" value="ECO:0000315"/>
    <property type="project" value="UniProtKB"/>
</dbReference>
<dbReference type="GO" id="GO:0000301">
    <property type="term" value="P:retrograde transport, vesicle recycling within Golgi"/>
    <property type="evidence" value="ECO:0000318"/>
    <property type="project" value="GO_Central"/>
</dbReference>
<dbReference type="FunFam" id="1.10.287.1490:FF:000009">
    <property type="entry name" value="Golgin subfamily A member 5"/>
    <property type="match status" value="1"/>
</dbReference>
<dbReference type="Gene3D" id="1.20.5.1700">
    <property type="match status" value="1"/>
</dbReference>
<dbReference type="InterPro" id="IPR019177">
    <property type="entry name" value="Golgin_subfamily_A_member_5"/>
</dbReference>
<dbReference type="PANTHER" id="PTHR13815:SF7">
    <property type="entry name" value="GOLGIN SUBFAMILY A MEMBER 5"/>
    <property type="match status" value="1"/>
</dbReference>
<dbReference type="PANTHER" id="PTHR13815">
    <property type="entry name" value="GOLGIN-84"/>
    <property type="match status" value="1"/>
</dbReference>
<dbReference type="Pfam" id="PF09787">
    <property type="entry name" value="Golgin_A5"/>
    <property type="match status" value="1"/>
</dbReference>
<evidence type="ECO:0000250" key="1">
    <source>
        <dbReference type="UniProtKB" id="Q3ZU82"/>
    </source>
</evidence>
<evidence type="ECO:0000255" key="2"/>
<evidence type="ECO:0000256" key="3">
    <source>
        <dbReference type="SAM" id="MobiDB-lite"/>
    </source>
</evidence>
<evidence type="ECO:0000269" key="4">
    <source>
    </source>
</evidence>
<evidence type="ECO:0000269" key="5">
    <source>
    </source>
</evidence>
<evidence type="ECO:0000269" key="6">
    <source>
    </source>
</evidence>
<evidence type="ECO:0000269" key="7">
    <source>
    </source>
</evidence>
<evidence type="ECO:0000269" key="8">
    <source>
    </source>
</evidence>
<evidence type="ECO:0000269" key="9">
    <source>
    </source>
</evidence>
<evidence type="ECO:0000303" key="10">
    <source ref="9"/>
</evidence>
<evidence type="ECO:0000305" key="11"/>
<evidence type="ECO:0007744" key="12">
    <source>
    </source>
</evidence>
<evidence type="ECO:0007744" key="13">
    <source>
    </source>
</evidence>
<evidence type="ECO:0007744" key="14">
    <source>
    </source>
</evidence>
<evidence type="ECO:0007744" key="15">
    <source>
    </source>
</evidence>
<evidence type="ECO:0007744" key="16">
    <source>
    </source>
</evidence>
<accession>Q8TBA6</accession>
<accession>C9JRU1</accession>
<accession>O95287</accession>
<accession>Q03962</accession>
<accession>Q2TS49</accession>
<accession>Q9UQQ7</accession>
<protein>
    <recommendedName>
        <fullName>Golgin subfamily A member 5</fullName>
    </recommendedName>
    <alternativeName>
        <fullName>Cell proliferation-inducing gene 31 protein</fullName>
    </alternativeName>
    <alternativeName>
        <fullName>Golgin-84</fullName>
    </alternativeName>
    <alternativeName>
        <fullName>Protein Ret-II</fullName>
    </alternativeName>
    <alternativeName>
        <fullName>RET-fused gene 5 protein</fullName>
    </alternativeName>
</protein>
<proteinExistence type="evidence at protein level"/>
<name>GOGA5_HUMAN</name>
<comment type="function">
    <text evidence="4 6">Involved in maintaining Golgi structure. Stimulates the formation of Golgi stacks and ribbons. Involved in intra-Golgi retrograde transport.</text>
</comment>
<comment type="subunit">
    <text evidence="4 6 9">Homodimer. Interacts with RAB1A that has been activated by GTP-binding, and possibly also with OCRL1. Interacts with isoform CASP of CUX1.</text>
</comment>
<comment type="subcellular location">
    <subcellularLocation>
        <location evidence="9">Golgi apparatus membrane</location>
        <topology evidence="9">Single-pass type IV membrane protein</topology>
    </subcellularLocation>
    <text>Found throughout the Golgi, both on cisternae and, at higher abundance, on the tubulo-vesicular structures of the cis-Golgi network.</text>
</comment>
<comment type="alternative products">
    <event type="alternative splicing"/>
    <isoform>
        <id>Q8TBA6-1</id>
        <name>1</name>
        <sequence type="displayed"/>
    </isoform>
    <isoform>
        <id>Q8TBA6-2</id>
        <name>2</name>
        <sequence type="described" ref="VSP_007731 VSP_007732"/>
    </isoform>
</comment>
<comment type="tissue specificity">
    <text evidence="9">Ubiquitous. Highly expressed in seminiferous tubules and Leydig cells in testis, and detected at much lower levels in the other tissues tested. Expression is very low or not detectable in spermatozoa.</text>
</comment>
<comment type="PTM">
    <text evidence="4">Highly phosphorylated during mitosis. Phosphorylation is barely detectable during interphase.</text>
</comment>
<comment type="disease">
    <text evidence="7 8">A chromosomal aberration involving GOLGA5 is found in papillary thyroid carcinomas (PTCs). Translocation t(10;14)(q11;q32) with RET. The translocation generates the RET/GOLGA5 (PTC5) oncogene.</text>
</comment>
<comment type="sequence caution" evidence="11">
    <conflict type="miscellaneous discrepancy">
        <sequence resource="EMBL-CDS" id="CAA33787"/>
    </conflict>
    <text>Chimeric cDNA. A chimeric cDNA originating from chromosomes 14 and 10.</text>
</comment>
<feature type="initiator methionine" description="Removed" evidence="15">
    <location>
        <position position="1"/>
    </location>
</feature>
<feature type="chain" id="PRO_0000190061" description="Golgin subfamily A member 5">
    <location>
        <begin position="2"/>
        <end position="731"/>
    </location>
</feature>
<feature type="topological domain" description="Cytoplasmic" evidence="2">
    <location>
        <begin position="2"/>
        <end position="698"/>
    </location>
</feature>
<feature type="transmembrane region" description="Helical; Anchor for type IV membrane protein" evidence="2">
    <location>
        <begin position="699"/>
        <end position="719"/>
    </location>
</feature>
<feature type="topological domain" description="Lumenal" evidence="2">
    <location>
        <begin position="720"/>
        <end position="731"/>
    </location>
</feature>
<feature type="region of interest" description="Disordered" evidence="3">
    <location>
        <begin position="93"/>
        <end position="222"/>
    </location>
</feature>
<feature type="coiled-coil region" evidence="2">
    <location>
        <begin position="216"/>
        <end position="632"/>
    </location>
</feature>
<feature type="compositionally biased region" description="Basic and acidic residues" evidence="3">
    <location>
        <begin position="134"/>
        <end position="146"/>
    </location>
</feature>
<feature type="compositionally biased region" description="Low complexity" evidence="3">
    <location>
        <begin position="147"/>
        <end position="167"/>
    </location>
</feature>
<feature type="compositionally biased region" description="Polar residues" evidence="3">
    <location>
        <begin position="173"/>
        <end position="188"/>
    </location>
</feature>
<feature type="compositionally biased region" description="Basic and acidic residues" evidence="3">
    <location>
        <begin position="189"/>
        <end position="199"/>
    </location>
</feature>
<feature type="site" description="Breakpoint for translocation to form RET-GOLGA5 oncogene">
    <location>
        <begin position="497"/>
        <end position="498"/>
    </location>
</feature>
<feature type="modified residue" description="N-acetylserine" evidence="15">
    <location>
        <position position="2"/>
    </location>
</feature>
<feature type="modified residue" description="Dimethylated arginine" evidence="1">
    <location>
        <position position="89"/>
    </location>
</feature>
<feature type="modified residue" description="Phosphoserine" evidence="12 13 14 16">
    <location>
        <position position="116"/>
    </location>
</feature>
<feature type="splice variant" id="VSP_007731" description="In isoform 2." evidence="10">
    <original>SIRLGIFL</original>
    <variation>RLCFTSGS</variation>
    <location>
        <begin position="684"/>
        <end position="691"/>
    </location>
</feature>
<feature type="splice variant" id="VSP_007732" description="In isoform 2." evidence="10">
    <location>
        <begin position="692"/>
        <end position="731"/>
    </location>
</feature>
<feature type="sequence variant" id="VAR_055859" description="In dbSNP:rs17128572." evidence="5">
    <original>A</original>
    <variation>G</variation>
    <location>
        <position position="67"/>
    </location>
</feature>
<feature type="sequence variant" id="VAR_055860" description="In dbSNP:rs34139657.">
    <original>M</original>
    <variation>V</variation>
    <location>
        <position position="486"/>
    </location>
</feature>
<feature type="sequence conflict" description="In Ref. 1; AAD09753, 2; AAV85456, 4; EAW81502, 5; AAH23021, 6; CAA33787 and 8; CAB36967." evidence="11" ref="1 2 4 5 6 8">
    <original>F</original>
    <variation>L</variation>
    <location>
        <position position="350"/>
    </location>
</feature>
<feature type="sequence conflict" description="In Ref. 8; CAB36967." evidence="11" ref="8">
    <original>QS</original>
    <variation>PV</variation>
    <location>
        <begin position="584"/>
        <end position="585"/>
    </location>
</feature>
<organism>
    <name type="scientific">Homo sapiens</name>
    <name type="common">Human</name>
    <dbReference type="NCBI Taxonomy" id="9606"/>
    <lineage>
        <taxon>Eukaryota</taxon>
        <taxon>Metazoa</taxon>
        <taxon>Chordata</taxon>
        <taxon>Craniata</taxon>
        <taxon>Vertebrata</taxon>
        <taxon>Euteleostomi</taxon>
        <taxon>Mammalia</taxon>
        <taxon>Eutheria</taxon>
        <taxon>Euarchontoglires</taxon>
        <taxon>Primates</taxon>
        <taxon>Haplorrhini</taxon>
        <taxon>Catarrhini</taxon>
        <taxon>Hominidae</taxon>
        <taxon>Homo</taxon>
    </lineage>
</organism>
<keyword id="KW-0007">Acetylation</keyword>
<keyword id="KW-0025">Alternative splicing</keyword>
<keyword id="KW-0160">Chromosomal rearrangement</keyword>
<keyword id="KW-0175">Coiled coil</keyword>
<keyword id="KW-0333">Golgi apparatus</keyword>
<keyword id="KW-0472">Membrane</keyword>
<keyword id="KW-0488">Methylation</keyword>
<keyword id="KW-0597">Phosphoprotein</keyword>
<keyword id="KW-1267">Proteomics identification</keyword>
<keyword id="KW-1185">Reference proteome</keyword>
<keyword id="KW-0812">Transmembrane</keyword>
<keyword id="KW-1133">Transmembrane helix</keyword>
<gene>
    <name type="primary">GOLGA5</name>
    <name type="synonym">RETII</name>
    <name type="synonym">RFG5</name>
    <name type="ORF">PIG31</name>
</gene>
<sequence length="731" mass="83024">MSWFVDLAGKAEDLLNRVDQGAATALSRKDNASNIYSKNTDYTELHQQNTDLIYQTGPKSTYISSAADNIRNQKATILAGTANVKVGSRTPVEASHPVENASVPRPSSHFVRRKKSEPDDELLFDFLNSSQKEPTGRVEIRKEKGKTPVFQSSQTSSVSSVNPSVTTIKTIEENSFGSQTHEAASNSDSSHEGQEESSKENVSSNAACPDHTPTPNDDGKSHELSNLRLENQLLRNEVQSLNQEMASLLQRSKETQEELNKARARVEKWNADHSKSDRMTRGLRAQVDDLTEAVAAKDSQLAVLKVRLQEADQLLSTRTEALEALQSEKSRIMQDQSEGNSLQNQALQTFQERLHEADATLKREQESYKQMQSEFAARLNKVEMERQNLAEAITLAERKYSDEKKRVDELQQQVKLYKLNLESSKQELIDYKQKATRILQSKEKLINSLKEGSGFEGLDSSTASSMELEELRHEKEMQREEIQKLMGQIHQLRSELQDMEAQQVNEAESAREQLQDLHDQIAGQKASKQELETELERLKQEFHYIEEDLYRTKNTLQSRIKDRDEEIQKLRNQLTNKTLSNSSQSELENRLHQLTETLIQKQTMLESLSTEKNSLVFQLERLEQQMNSASGSSSNGSSINMSGIDNGEGTRLRNVPVLFNDTETNLAGMYGKVRKAASSIDQFSIRLGIFLRRYPIARVFVIIYMALLHLWVMIVLLTYTPEMHHDQPYGK</sequence>
<reference key="1">
    <citation type="journal article" date="1999" name="J. Biol. Chem.">
        <title>Identification and characterization of golgin-84, a novel Golgi integral membrane protein with a cytoplasmic coiled-coil domain.</title>
        <authorList>
            <person name="Bascom R.A."/>
            <person name="Srinivasan S."/>
            <person name="Nussbaum R.L."/>
        </authorList>
    </citation>
    <scope>NUCLEOTIDE SEQUENCE [MRNA] (ISOFORM 1)</scope>
    <scope>SUBCELLULAR LOCATION</scope>
    <scope>TOPOLOGY</scope>
    <scope>DIMERIZATION</scope>
    <scope>INTERACTION WITH OCRL1</scope>
    <scope>TISSUE SPECIFICITY</scope>
    <source>
        <tissue>Testis</tissue>
    </source>
</reference>
<reference key="2">
    <citation type="submission" date="2004-06" db="EMBL/GenBank/DDBJ databases">
        <title>Identification of a human cell proliferation gene.</title>
        <authorList>
            <person name="Kim J.W."/>
        </authorList>
    </citation>
    <scope>NUCLEOTIDE SEQUENCE [LARGE SCALE MRNA] (ISOFORM 1)</scope>
</reference>
<reference key="3">
    <citation type="journal article" date="2003" name="Nature">
        <title>The DNA sequence and analysis of human chromosome 14.</title>
        <authorList>
            <person name="Heilig R."/>
            <person name="Eckenberg R."/>
            <person name="Petit J.-L."/>
            <person name="Fonknechten N."/>
            <person name="Da Silva C."/>
            <person name="Cattolico L."/>
            <person name="Levy M."/>
            <person name="Barbe V."/>
            <person name="De Berardinis V."/>
            <person name="Ureta-Vidal A."/>
            <person name="Pelletier E."/>
            <person name="Vico V."/>
            <person name="Anthouard V."/>
            <person name="Rowen L."/>
            <person name="Madan A."/>
            <person name="Qin S."/>
            <person name="Sun H."/>
            <person name="Du H."/>
            <person name="Pepin K."/>
            <person name="Artiguenave F."/>
            <person name="Robert C."/>
            <person name="Cruaud C."/>
            <person name="Bruels T."/>
            <person name="Jaillon O."/>
            <person name="Friedlander L."/>
            <person name="Samson G."/>
            <person name="Brottier P."/>
            <person name="Cure S."/>
            <person name="Segurens B."/>
            <person name="Aniere F."/>
            <person name="Samain S."/>
            <person name="Crespeau H."/>
            <person name="Abbasi N."/>
            <person name="Aiach N."/>
            <person name="Boscus D."/>
            <person name="Dickhoff R."/>
            <person name="Dors M."/>
            <person name="Dubois I."/>
            <person name="Friedman C."/>
            <person name="Gouyvenoux M."/>
            <person name="James R."/>
            <person name="Madan A."/>
            <person name="Mairey-Estrada B."/>
            <person name="Mangenot S."/>
            <person name="Martins N."/>
            <person name="Menard M."/>
            <person name="Oztas S."/>
            <person name="Ratcliffe A."/>
            <person name="Shaffer T."/>
            <person name="Trask B."/>
            <person name="Vacherie B."/>
            <person name="Bellemere C."/>
            <person name="Belser C."/>
            <person name="Besnard-Gonnet M."/>
            <person name="Bartol-Mavel D."/>
            <person name="Boutard M."/>
            <person name="Briez-Silla S."/>
            <person name="Combette S."/>
            <person name="Dufosse-Laurent V."/>
            <person name="Ferron C."/>
            <person name="Lechaplais C."/>
            <person name="Louesse C."/>
            <person name="Muselet D."/>
            <person name="Magdelenat G."/>
            <person name="Pateau E."/>
            <person name="Petit E."/>
            <person name="Sirvain-Trukniewicz P."/>
            <person name="Trybou A."/>
            <person name="Vega-Czarny N."/>
            <person name="Bataille E."/>
            <person name="Bluet E."/>
            <person name="Bordelais I."/>
            <person name="Dubois M."/>
            <person name="Dumont C."/>
            <person name="Guerin T."/>
            <person name="Haffray S."/>
            <person name="Hammadi R."/>
            <person name="Muanga J."/>
            <person name="Pellouin V."/>
            <person name="Robert D."/>
            <person name="Wunderle E."/>
            <person name="Gauguet G."/>
            <person name="Roy A."/>
            <person name="Sainte-Marthe L."/>
            <person name="Verdier J."/>
            <person name="Verdier-Discala C."/>
            <person name="Hillier L.W."/>
            <person name="Fulton L."/>
            <person name="McPherson J."/>
            <person name="Matsuda F."/>
            <person name="Wilson R."/>
            <person name="Scarpelli C."/>
            <person name="Gyapay G."/>
            <person name="Wincker P."/>
            <person name="Saurin W."/>
            <person name="Quetier F."/>
            <person name="Waterston R."/>
            <person name="Hood L."/>
            <person name="Weissenbach J."/>
        </authorList>
    </citation>
    <scope>NUCLEOTIDE SEQUENCE [LARGE SCALE GENOMIC DNA]</scope>
</reference>
<reference key="4">
    <citation type="submission" date="2005-07" db="EMBL/GenBank/DDBJ databases">
        <authorList>
            <person name="Mural R.J."/>
            <person name="Istrail S."/>
            <person name="Sutton G.G."/>
            <person name="Florea L."/>
            <person name="Halpern A.L."/>
            <person name="Mobarry C.M."/>
            <person name="Lippert R."/>
            <person name="Walenz B."/>
            <person name="Shatkay H."/>
            <person name="Dew I."/>
            <person name="Miller J.R."/>
            <person name="Flanigan M.J."/>
            <person name="Edwards N.J."/>
            <person name="Bolanos R."/>
            <person name="Fasulo D."/>
            <person name="Halldorsson B.V."/>
            <person name="Hannenhalli S."/>
            <person name="Turner R."/>
            <person name="Yooseph S."/>
            <person name="Lu F."/>
            <person name="Nusskern D.R."/>
            <person name="Shue B.C."/>
            <person name="Zheng X.H."/>
            <person name="Zhong F."/>
            <person name="Delcher A.L."/>
            <person name="Huson D.H."/>
            <person name="Kravitz S.A."/>
            <person name="Mouchard L."/>
            <person name="Reinert K."/>
            <person name="Remington K.A."/>
            <person name="Clark A.G."/>
            <person name="Waterman M.S."/>
            <person name="Eichler E.E."/>
            <person name="Adams M.D."/>
            <person name="Hunkapiller M.W."/>
            <person name="Myers E.W."/>
            <person name="Venter J.C."/>
        </authorList>
    </citation>
    <scope>NUCLEOTIDE SEQUENCE [LARGE SCALE GENOMIC DNA]</scope>
</reference>
<reference key="5">
    <citation type="journal article" date="2004" name="Genome Res.">
        <title>The status, quality, and expansion of the NIH full-length cDNA project: the Mammalian Gene Collection (MGC).</title>
        <authorList>
            <consortium name="The MGC Project Team"/>
        </authorList>
    </citation>
    <scope>NUCLEOTIDE SEQUENCE [LARGE SCALE MRNA] (ISOFORM 1)</scope>
    <scope>VARIANT GLY-67</scope>
    <source>
        <tissue>Placenta</tissue>
    </source>
</reference>
<reference key="6">
    <citation type="journal article" date="1989" name="Oncogene">
        <title>Activation of the ret-II oncogene without a sequence encoding a transmembrane domain and transforming activity of two ret-II oncogene products differing in carboxy-termini due to alternative splicing.</title>
        <authorList>
            <person name="Ishizaka Y."/>
            <person name="Ochiai M."/>
            <person name="Tahira T."/>
            <person name="Suhimura T."/>
            <person name="Nahao M."/>
        </authorList>
    </citation>
    <scope>NUCLEOTIDE SEQUENCE [MRNA] OF 1-497 (ISOFORM 1)</scope>
    <scope>CHROMOSOMAL TRANSLOCATION WITH RET</scope>
    <source>
        <tissue>Fibroblast</tissue>
    </source>
</reference>
<reference key="7">
    <citation type="journal article" date="1989" name="Oncogene">
        <authorList>
            <person name="Ishizaka Y."/>
            <person name="Ochiai M."/>
            <person name="Tahira T."/>
            <person name="Suhimura T."/>
            <person name="Nahao M."/>
        </authorList>
    </citation>
    <scope>ERRATUM OF PUBMED:2734021</scope>
</reference>
<reference key="8">
    <citation type="journal article" date="1998" name="Cancer Res.">
        <title>Detection of a novel type of Ret rearrangement (PTC5) in thyroid carcinomas after Chernobyl and analysis of the involved Ret-fused gene RFG5.</title>
        <authorList>
            <person name="Klugbauer S."/>
            <person name="Demidchik E.P."/>
            <person name="Lengfelder E."/>
            <person name="Rabes H.M."/>
        </authorList>
    </citation>
    <scope>NUCLEOTIDE SEQUENCE [MRNA] OF 1-585</scope>
    <scope>CHROMOSOMAL TRANSLOCATION WITH RET</scope>
    <source>
        <tissue>Thyroid</tissue>
    </source>
</reference>
<reference key="9">
    <citation type="submission" date="2003-02" db="EMBL/GenBank/DDBJ databases">
        <title>Full-length cDNA libraries and normalization.</title>
        <authorList>
            <person name="Li W.B."/>
            <person name="Gruber C."/>
            <person name="Jessee J."/>
            <person name="Polayes D."/>
        </authorList>
    </citation>
    <scope>NUCLEOTIDE SEQUENCE [LARGE SCALE MRNA] OF 576-731 (ISOFORM 2)</scope>
    <source>
        <tissue>Neuroblastoma</tissue>
    </source>
</reference>
<reference key="10">
    <citation type="journal article" date="2003" name="J. Cell Biol.">
        <title>The coiled-coil membrane protein golgin-84 is a novel rab effector required for Golgi ribbon formation.</title>
        <authorList>
            <person name="Diao A."/>
            <person name="Rahman D."/>
            <person name="Pappin D.J.C."/>
            <person name="Lucocq J."/>
            <person name="Lowe M."/>
        </authorList>
    </citation>
    <scope>FUNCTION</scope>
    <scope>PHOSPHORYLATION</scope>
    <scope>INTERACTION WITH RAB1A</scope>
</reference>
<reference key="11">
    <citation type="journal article" date="2004" name="Anal. Chem.">
        <title>Robust phosphoproteomic profiling of tyrosine phosphorylation sites from human T cells using immobilized metal affinity chromatography and tandem mass spectrometry.</title>
        <authorList>
            <person name="Brill L.M."/>
            <person name="Salomon A.R."/>
            <person name="Ficarro S.B."/>
            <person name="Mukherji M."/>
            <person name="Stettler-Gill M."/>
            <person name="Peters E.C."/>
        </authorList>
    </citation>
    <scope>IDENTIFICATION BY MASS SPECTROMETRY [LARGE SCALE ANALYSIS]</scope>
    <source>
        <tissue>Leukemic T-cell</tissue>
    </source>
</reference>
<reference key="12">
    <citation type="journal article" date="2005" name="Nat. Biotechnol.">
        <title>Immunoaffinity profiling of tyrosine phosphorylation in cancer cells.</title>
        <authorList>
            <person name="Rush J."/>
            <person name="Moritz A."/>
            <person name="Lee K.A."/>
            <person name="Guo A."/>
            <person name="Goss V.L."/>
            <person name="Spek E.J."/>
            <person name="Zhang H."/>
            <person name="Zha X.-M."/>
            <person name="Polakiewicz R.D."/>
            <person name="Comb M.J."/>
        </authorList>
    </citation>
    <scope>IDENTIFICATION BY MASS SPECTROMETRY [LARGE SCALE ANALYSIS]</scope>
</reference>
<reference key="13">
    <citation type="journal article" date="2005" name="Science">
        <title>Golgin tethers define subpopulations of COPI vesicles.</title>
        <authorList>
            <person name="Malsam J."/>
            <person name="Satoh A."/>
            <person name="Pelletier L."/>
            <person name="Warren G."/>
        </authorList>
    </citation>
    <scope>FUNCTION</scope>
    <scope>INTERACTION WITH CUX1</scope>
</reference>
<reference key="14">
    <citation type="journal article" date="2006" name="Cell">
        <title>Global, in vivo, and site-specific phosphorylation dynamics in signaling networks.</title>
        <authorList>
            <person name="Olsen J.V."/>
            <person name="Blagoev B."/>
            <person name="Gnad F."/>
            <person name="Macek B."/>
            <person name="Kumar C."/>
            <person name="Mortensen P."/>
            <person name="Mann M."/>
        </authorList>
    </citation>
    <scope>PHOSPHORYLATION [LARGE SCALE ANALYSIS] AT SER-116</scope>
    <scope>IDENTIFICATION BY MASS SPECTROMETRY [LARGE SCALE ANALYSIS]</scope>
    <source>
        <tissue>Cervix carcinoma</tissue>
    </source>
</reference>
<reference key="15">
    <citation type="journal article" date="2008" name="Proc. Natl. Acad. Sci. U.S.A.">
        <title>A quantitative atlas of mitotic phosphorylation.</title>
        <authorList>
            <person name="Dephoure N."/>
            <person name="Zhou C."/>
            <person name="Villen J."/>
            <person name="Beausoleil S.A."/>
            <person name="Bakalarski C.E."/>
            <person name="Elledge S.J."/>
            <person name="Gygi S.P."/>
        </authorList>
    </citation>
    <scope>PHOSPHORYLATION [LARGE SCALE ANALYSIS] AT SER-116</scope>
    <scope>IDENTIFICATION BY MASS SPECTROMETRY [LARGE SCALE ANALYSIS]</scope>
    <source>
        <tissue>Cervix carcinoma</tissue>
    </source>
</reference>
<reference key="16">
    <citation type="journal article" date="2011" name="BMC Syst. Biol.">
        <title>Initial characterization of the human central proteome.</title>
        <authorList>
            <person name="Burkard T.R."/>
            <person name="Planyavsky M."/>
            <person name="Kaupe I."/>
            <person name="Breitwieser F.P."/>
            <person name="Buerckstuemmer T."/>
            <person name="Bennett K.L."/>
            <person name="Superti-Furga G."/>
            <person name="Colinge J."/>
        </authorList>
    </citation>
    <scope>IDENTIFICATION BY MASS SPECTROMETRY [LARGE SCALE ANALYSIS]</scope>
</reference>
<reference key="17">
    <citation type="journal article" date="2011" name="Sci. Signal.">
        <title>System-wide temporal characterization of the proteome and phosphoproteome of human embryonic stem cell differentiation.</title>
        <authorList>
            <person name="Rigbolt K.T."/>
            <person name="Prokhorova T.A."/>
            <person name="Akimov V."/>
            <person name="Henningsen J."/>
            <person name="Johansen P.T."/>
            <person name="Kratchmarova I."/>
            <person name="Kassem M."/>
            <person name="Mann M."/>
            <person name="Olsen J.V."/>
            <person name="Blagoev B."/>
        </authorList>
    </citation>
    <scope>PHOSPHORYLATION [LARGE SCALE ANALYSIS] AT SER-116</scope>
    <scope>IDENTIFICATION BY MASS SPECTROMETRY [LARGE SCALE ANALYSIS]</scope>
</reference>
<reference key="18">
    <citation type="journal article" date="2012" name="Mol. Cell. Proteomics">
        <title>Comparative large-scale characterisation of plant vs. mammal proteins reveals similar and idiosyncratic N-alpha acetylation features.</title>
        <authorList>
            <person name="Bienvenut W.V."/>
            <person name="Sumpton D."/>
            <person name="Martinez A."/>
            <person name="Lilla S."/>
            <person name="Espagne C."/>
            <person name="Meinnel T."/>
            <person name="Giglione C."/>
        </authorList>
    </citation>
    <scope>ACETYLATION [LARGE SCALE ANALYSIS] AT SER-2</scope>
    <scope>CLEAVAGE OF INITIATOR METHIONINE [LARGE SCALE ANALYSIS]</scope>
    <scope>IDENTIFICATION BY MASS SPECTROMETRY [LARGE SCALE ANALYSIS]</scope>
</reference>
<reference key="19">
    <citation type="journal article" date="2014" name="J. Proteomics">
        <title>An enzyme assisted RP-RPLC approach for in-depth analysis of human liver phosphoproteome.</title>
        <authorList>
            <person name="Bian Y."/>
            <person name="Song C."/>
            <person name="Cheng K."/>
            <person name="Dong M."/>
            <person name="Wang F."/>
            <person name="Huang J."/>
            <person name="Sun D."/>
            <person name="Wang L."/>
            <person name="Ye M."/>
            <person name="Zou H."/>
        </authorList>
    </citation>
    <scope>PHOSPHORYLATION [LARGE SCALE ANALYSIS] AT SER-116</scope>
    <scope>IDENTIFICATION BY MASS SPECTROMETRY [LARGE SCALE ANALYSIS]</scope>
    <source>
        <tissue>Liver</tissue>
    </source>
</reference>